<gene>
    <name evidence="1" type="primary">pat</name>
    <name type="synonym">hisC2</name>
    <name type="ordered locus">SCO3944</name>
    <name type="ORF">SCD78.11</name>
</gene>
<organism>
    <name type="scientific">Streptomyces coelicolor (strain ATCC BAA-471 / A3(2) / M145)</name>
    <dbReference type="NCBI Taxonomy" id="100226"/>
    <lineage>
        <taxon>Bacteria</taxon>
        <taxon>Bacillati</taxon>
        <taxon>Actinomycetota</taxon>
        <taxon>Actinomycetes</taxon>
        <taxon>Kitasatosporales</taxon>
        <taxon>Streptomycetaceae</taxon>
        <taxon>Streptomyces</taxon>
        <taxon>Streptomyces albidoflavus group</taxon>
    </lineage>
</organism>
<proteinExistence type="inferred from homology"/>
<comment type="function">
    <text evidence="1">Aminotransferase that catalyzes the conversion of aromatic amino acids and 2-oxoglutarate into corresponding aromatic oxo acids and L-glutamate.</text>
</comment>
<comment type="catalytic activity">
    <reaction evidence="1">
        <text>an aromatic L-alpha-amino acid + 2-oxoglutarate = an aromatic oxo-acid + L-glutamate</text>
        <dbReference type="Rhea" id="RHEA:17533"/>
        <dbReference type="ChEBI" id="CHEBI:16810"/>
        <dbReference type="ChEBI" id="CHEBI:29985"/>
        <dbReference type="ChEBI" id="CHEBI:73309"/>
        <dbReference type="ChEBI" id="CHEBI:84824"/>
        <dbReference type="EC" id="2.6.1.57"/>
    </reaction>
</comment>
<comment type="cofactor">
    <cofactor evidence="1">
        <name>pyridoxal 5'-phosphate</name>
        <dbReference type="ChEBI" id="CHEBI:597326"/>
    </cofactor>
</comment>
<comment type="subunit">
    <text evidence="1">Homodimer.</text>
</comment>
<comment type="similarity">
    <text evidence="1">Belongs to the class-II pyridoxal-phosphate-dependent aminotransferase family.</text>
</comment>
<keyword id="KW-0032">Aminotransferase</keyword>
<keyword id="KW-0663">Pyridoxal phosphate</keyword>
<keyword id="KW-1185">Reference proteome</keyword>
<keyword id="KW-0808">Transferase</keyword>
<evidence type="ECO:0000255" key="1">
    <source>
        <dbReference type="HAMAP-Rule" id="MF_01513"/>
    </source>
</evidence>
<evidence type="ECO:0000256" key="2">
    <source>
        <dbReference type="SAM" id="MobiDB-lite"/>
    </source>
</evidence>
<reference key="1">
    <citation type="journal article" date="2002" name="Nature">
        <title>Complete genome sequence of the model actinomycete Streptomyces coelicolor A3(2).</title>
        <authorList>
            <person name="Bentley S.D."/>
            <person name="Chater K.F."/>
            <person name="Cerdeno-Tarraga A.-M."/>
            <person name="Challis G.L."/>
            <person name="Thomson N.R."/>
            <person name="James K.D."/>
            <person name="Harris D.E."/>
            <person name="Quail M.A."/>
            <person name="Kieser H."/>
            <person name="Harper D."/>
            <person name="Bateman A."/>
            <person name="Brown S."/>
            <person name="Chandra G."/>
            <person name="Chen C.W."/>
            <person name="Collins M."/>
            <person name="Cronin A."/>
            <person name="Fraser A."/>
            <person name="Goble A."/>
            <person name="Hidalgo J."/>
            <person name="Hornsby T."/>
            <person name="Howarth S."/>
            <person name="Huang C.-H."/>
            <person name="Kieser T."/>
            <person name="Larke L."/>
            <person name="Murphy L.D."/>
            <person name="Oliver K."/>
            <person name="O'Neil S."/>
            <person name="Rabbinowitsch E."/>
            <person name="Rajandream M.A."/>
            <person name="Rutherford K.M."/>
            <person name="Rutter S."/>
            <person name="Seeger K."/>
            <person name="Saunders D."/>
            <person name="Sharp S."/>
            <person name="Squares R."/>
            <person name="Squares S."/>
            <person name="Taylor K."/>
            <person name="Warren T."/>
            <person name="Wietzorrek A."/>
            <person name="Woodward J.R."/>
            <person name="Barrell B.G."/>
            <person name="Parkhill J."/>
            <person name="Hopwood D.A."/>
        </authorList>
    </citation>
    <scope>NUCLEOTIDE SEQUENCE [LARGE SCALE GENOMIC DNA]</scope>
    <source>
        <strain>ATCC BAA-471 / A3(2) / M145</strain>
    </source>
</reference>
<dbReference type="EC" id="2.6.1.57" evidence="1"/>
<dbReference type="EMBL" id="AL939118">
    <property type="protein sequence ID" value="CAA22216.1"/>
    <property type="molecule type" value="Genomic_DNA"/>
</dbReference>
<dbReference type="PIR" id="T36050">
    <property type="entry name" value="T36050"/>
</dbReference>
<dbReference type="RefSeq" id="NP_628128.1">
    <property type="nucleotide sequence ID" value="NC_003888.3"/>
</dbReference>
<dbReference type="SMR" id="Q9ZBY8"/>
<dbReference type="FunCoup" id="Q9ZBY8">
    <property type="interactions" value="217"/>
</dbReference>
<dbReference type="STRING" id="100226.gene:17761571"/>
<dbReference type="PaxDb" id="100226-SCO3944"/>
<dbReference type="KEGG" id="sco:SCO3944"/>
<dbReference type="PATRIC" id="fig|100226.15.peg.4016"/>
<dbReference type="eggNOG" id="COG0079">
    <property type="taxonomic scope" value="Bacteria"/>
</dbReference>
<dbReference type="HOGENOM" id="CLU_017584_3_3_11"/>
<dbReference type="InParanoid" id="Q9ZBY8"/>
<dbReference type="OrthoDB" id="9809616at2"/>
<dbReference type="PhylomeDB" id="Q9ZBY8"/>
<dbReference type="Proteomes" id="UP000001973">
    <property type="component" value="Chromosome"/>
</dbReference>
<dbReference type="GO" id="GO:0008793">
    <property type="term" value="F:aromatic-amino-acid transaminase activity"/>
    <property type="evidence" value="ECO:0007669"/>
    <property type="project" value="UniProtKB-UniRule"/>
</dbReference>
<dbReference type="GO" id="GO:0004400">
    <property type="term" value="F:histidinol-phosphate transaminase activity"/>
    <property type="evidence" value="ECO:0007669"/>
    <property type="project" value="InterPro"/>
</dbReference>
<dbReference type="GO" id="GO:0030170">
    <property type="term" value="F:pyridoxal phosphate binding"/>
    <property type="evidence" value="ECO:0007669"/>
    <property type="project" value="UniProtKB-UniRule"/>
</dbReference>
<dbReference type="GO" id="GO:0000105">
    <property type="term" value="P:L-histidine biosynthetic process"/>
    <property type="evidence" value="ECO:0007669"/>
    <property type="project" value="InterPro"/>
</dbReference>
<dbReference type="CDD" id="cd00609">
    <property type="entry name" value="AAT_like"/>
    <property type="match status" value="1"/>
</dbReference>
<dbReference type="Gene3D" id="3.90.1150.10">
    <property type="entry name" value="Aspartate Aminotransferase, domain 1"/>
    <property type="match status" value="1"/>
</dbReference>
<dbReference type="Gene3D" id="3.40.640.10">
    <property type="entry name" value="Type I PLP-dependent aspartate aminotransferase-like (Major domain)"/>
    <property type="match status" value="1"/>
</dbReference>
<dbReference type="HAMAP" id="MF_01023">
    <property type="entry name" value="HisC_aminotrans_2"/>
    <property type="match status" value="1"/>
</dbReference>
<dbReference type="HAMAP" id="MF_01513">
    <property type="entry name" value="Phe_aminotrans_2"/>
    <property type="match status" value="1"/>
</dbReference>
<dbReference type="InterPro" id="IPR001917">
    <property type="entry name" value="Aminotrans_II_pyridoxalP_BS"/>
</dbReference>
<dbReference type="InterPro" id="IPR004839">
    <property type="entry name" value="Aminotransferase_I/II_large"/>
</dbReference>
<dbReference type="InterPro" id="IPR024892">
    <property type="entry name" value="ArAT"/>
</dbReference>
<dbReference type="InterPro" id="IPR005861">
    <property type="entry name" value="HisP_aminotrans"/>
</dbReference>
<dbReference type="InterPro" id="IPR050106">
    <property type="entry name" value="HistidinolP_aminotransfase"/>
</dbReference>
<dbReference type="InterPro" id="IPR015424">
    <property type="entry name" value="PyrdxlP-dep_Trfase"/>
</dbReference>
<dbReference type="InterPro" id="IPR015421">
    <property type="entry name" value="PyrdxlP-dep_Trfase_major"/>
</dbReference>
<dbReference type="InterPro" id="IPR015422">
    <property type="entry name" value="PyrdxlP-dep_Trfase_small"/>
</dbReference>
<dbReference type="NCBIfam" id="TIGR01141">
    <property type="entry name" value="hisC"/>
    <property type="match status" value="1"/>
</dbReference>
<dbReference type="NCBIfam" id="NF002878">
    <property type="entry name" value="PRK03321.1"/>
    <property type="match status" value="1"/>
</dbReference>
<dbReference type="PANTHER" id="PTHR43643:SF3">
    <property type="entry name" value="HISTIDINOL-PHOSPHATE AMINOTRANSFERASE"/>
    <property type="match status" value="1"/>
</dbReference>
<dbReference type="PANTHER" id="PTHR43643">
    <property type="entry name" value="HISTIDINOL-PHOSPHATE AMINOTRANSFERASE 2"/>
    <property type="match status" value="1"/>
</dbReference>
<dbReference type="Pfam" id="PF00155">
    <property type="entry name" value="Aminotran_1_2"/>
    <property type="match status" value="1"/>
</dbReference>
<dbReference type="SUPFAM" id="SSF53383">
    <property type="entry name" value="PLP-dependent transferases"/>
    <property type="match status" value="1"/>
</dbReference>
<dbReference type="PROSITE" id="PS00599">
    <property type="entry name" value="AA_TRANSFER_CLASS_2"/>
    <property type="match status" value="1"/>
</dbReference>
<sequence length="359" mass="38794">MSETSPKLRAELEGIPTYKPGKPAAADGPVAYKLSSNENPYPPLPGVMETVTAAAASFNRYPDMACTSLMAELSDRFGVPLAHLATGTGSVGVAQQLIQATSGPGDEVIYAWRSFEAYPIITQISGARSVQVPLTPGEVHDLDAMADAITDRTRLIFVCNPNNPTGTVVRRAELERFLDRVPSDVLVVLDEAYREFIRDAEVPDGVEFYRERPNVCVLRTFSKAYGLAGLRVGFAIAHEPVAAALRKTAVPFGVSQIAQEAAIASLRAEDELIGRVGSLVCERARVADALRAQGWTVPESQANFVWLRLGERTLAFANACEQAGVVVRPFAGEGVRVTVGESEANDIFLKVSEEFRKEL</sequence>
<feature type="chain" id="PRO_0000153521" description="Aromatic amino acid aminotransferase">
    <location>
        <begin position="1"/>
        <end position="359"/>
    </location>
</feature>
<feature type="region of interest" description="Disordered" evidence="2">
    <location>
        <begin position="1"/>
        <end position="21"/>
    </location>
</feature>
<feature type="compositionally biased region" description="Basic and acidic residues" evidence="2">
    <location>
        <begin position="1"/>
        <end position="12"/>
    </location>
</feature>
<feature type="modified residue" description="N6-(pyridoxal phosphate)lysine" evidence="1">
    <location>
        <position position="223"/>
    </location>
</feature>
<name>PATR_STRCO</name>
<accession>Q9ZBY8</accession>
<protein>
    <recommendedName>
        <fullName evidence="1">Aromatic amino acid aminotransferase</fullName>
        <shortName evidence="1">ArAT</shortName>
        <ecNumber evidence="1">2.6.1.57</ecNumber>
    </recommendedName>
</protein>